<sequence length="470" mass="52630">MIDKEVIVIGAGLAGSEAAWQIANAGVPVKLVEMRPYKSTPAHHTGEFGELVCSNSFGAISADRAAGLLQKELRIFNSLIVQTADKFAVPAGGALAVDRSKFSNALTETLSNHPLINIKRIEQLDLPSKENITILATGPLTSDDLAYKIQDFTGIDDCHFFDAASPIIYGDSIDHEIVFKASRYDKGDPAYLNCPMDKYEYTNFRNQLIEGEQANLKDFEKESANFFEACLPIEEIARRGIDTMRYGPLKSIGLWNPKWGDLFDRDNRLKKRPHAIVQLRKEDLEGKLLNMVGFQTNLKWSEQKRIFRIIPGLEKAEFVRFGVMHRNTFLESPKLLLPTLQFMKRESLFAAGQITGTEGYAAAAAGGLLAGINASLIAKGEIAVTFPDESMIGSLMNFISNRNKIMSSQKKNKFQPIPASFGLVPELTKRIKDKRSRYIAYQQRSVDVLNIFKRKLDYIFNKDHTLVKIN</sequence>
<evidence type="ECO:0000255" key="1">
    <source>
        <dbReference type="HAMAP-Rule" id="MF_01037"/>
    </source>
</evidence>
<feature type="chain" id="PRO_0000346379" description="Methylenetetrahydrofolate--tRNA-(uracil-5-)-methyltransferase TrmFO">
    <location>
        <begin position="1"/>
        <end position="470"/>
    </location>
</feature>
<feature type="binding site" evidence="1">
    <location>
        <begin position="10"/>
        <end position="15"/>
    </location>
    <ligand>
        <name>FAD</name>
        <dbReference type="ChEBI" id="CHEBI:57692"/>
    </ligand>
</feature>
<dbReference type="EC" id="2.1.1.74" evidence="1"/>
<dbReference type="EMBL" id="CP000111">
    <property type="protein sequence ID" value="ABB50186.1"/>
    <property type="molecule type" value="Genomic_DNA"/>
</dbReference>
<dbReference type="RefSeq" id="WP_011376677.1">
    <property type="nucleotide sequence ID" value="NC_007577.1"/>
</dbReference>
<dbReference type="SMR" id="Q31AA9"/>
<dbReference type="STRING" id="74546.PMT9312_1127"/>
<dbReference type="KEGG" id="pmi:PMT9312_1127"/>
<dbReference type="eggNOG" id="COG1206">
    <property type="taxonomic scope" value="Bacteria"/>
</dbReference>
<dbReference type="HOGENOM" id="CLU_033057_1_0_3"/>
<dbReference type="OrthoDB" id="9803114at2"/>
<dbReference type="Proteomes" id="UP000002715">
    <property type="component" value="Chromosome"/>
</dbReference>
<dbReference type="GO" id="GO:0005829">
    <property type="term" value="C:cytosol"/>
    <property type="evidence" value="ECO:0007669"/>
    <property type="project" value="TreeGrafter"/>
</dbReference>
<dbReference type="GO" id="GO:0050660">
    <property type="term" value="F:flavin adenine dinucleotide binding"/>
    <property type="evidence" value="ECO:0007669"/>
    <property type="project" value="UniProtKB-UniRule"/>
</dbReference>
<dbReference type="GO" id="GO:0047151">
    <property type="term" value="F:tRNA (uracil(54)-C5)-methyltransferase activity, 5,10-methylenetetrahydrofolate-dependent"/>
    <property type="evidence" value="ECO:0007669"/>
    <property type="project" value="UniProtKB-UniRule"/>
</dbReference>
<dbReference type="GO" id="GO:0030488">
    <property type="term" value="P:tRNA methylation"/>
    <property type="evidence" value="ECO:0007669"/>
    <property type="project" value="TreeGrafter"/>
</dbReference>
<dbReference type="GO" id="GO:0002098">
    <property type="term" value="P:tRNA wobble uridine modification"/>
    <property type="evidence" value="ECO:0007669"/>
    <property type="project" value="TreeGrafter"/>
</dbReference>
<dbReference type="Gene3D" id="3.50.50.60">
    <property type="entry name" value="FAD/NAD(P)-binding domain"/>
    <property type="match status" value="2"/>
</dbReference>
<dbReference type="HAMAP" id="MF_01037">
    <property type="entry name" value="TrmFO"/>
    <property type="match status" value="1"/>
</dbReference>
<dbReference type="InterPro" id="IPR036188">
    <property type="entry name" value="FAD/NAD-bd_sf"/>
</dbReference>
<dbReference type="InterPro" id="IPR002218">
    <property type="entry name" value="MnmG-rel"/>
</dbReference>
<dbReference type="InterPro" id="IPR020595">
    <property type="entry name" value="MnmG-rel_CS"/>
</dbReference>
<dbReference type="InterPro" id="IPR040131">
    <property type="entry name" value="MnmG_N"/>
</dbReference>
<dbReference type="InterPro" id="IPR004417">
    <property type="entry name" value="TrmFO"/>
</dbReference>
<dbReference type="NCBIfam" id="TIGR00137">
    <property type="entry name" value="gid_trmFO"/>
    <property type="match status" value="1"/>
</dbReference>
<dbReference type="NCBIfam" id="NF003739">
    <property type="entry name" value="PRK05335.1"/>
    <property type="match status" value="1"/>
</dbReference>
<dbReference type="PANTHER" id="PTHR11806">
    <property type="entry name" value="GLUCOSE INHIBITED DIVISION PROTEIN A"/>
    <property type="match status" value="1"/>
</dbReference>
<dbReference type="PANTHER" id="PTHR11806:SF2">
    <property type="entry name" value="METHYLENETETRAHYDROFOLATE--TRNA-(URACIL-5-)-METHYLTRANSFERASE TRMFO"/>
    <property type="match status" value="1"/>
</dbReference>
<dbReference type="Pfam" id="PF01134">
    <property type="entry name" value="GIDA"/>
    <property type="match status" value="1"/>
</dbReference>
<dbReference type="SUPFAM" id="SSF51905">
    <property type="entry name" value="FAD/NAD(P)-binding domain"/>
    <property type="match status" value="1"/>
</dbReference>
<dbReference type="PROSITE" id="PS01281">
    <property type="entry name" value="GIDA_2"/>
    <property type="match status" value="1"/>
</dbReference>
<organism>
    <name type="scientific">Prochlorococcus marinus (strain MIT 9312)</name>
    <dbReference type="NCBI Taxonomy" id="74546"/>
    <lineage>
        <taxon>Bacteria</taxon>
        <taxon>Bacillati</taxon>
        <taxon>Cyanobacteriota</taxon>
        <taxon>Cyanophyceae</taxon>
        <taxon>Synechococcales</taxon>
        <taxon>Prochlorococcaceae</taxon>
        <taxon>Prochlorococcus</taxon>
    </lineage>
</organism>
<keyword id="KW-0963">Cytoplasm</keyword>
<keyword id="KW-0274">FAD</keyword>
<keyword id="KW-0285">Flavoprotein</keyword>
<keyword id="KW-0489">Methyltransferase</keyword>
<keyword id="KW-0520">NAD</keyword>
<keyword id="KW-0521">NADP</keyword>
<keyword id="KW-0808">Transferase</keyword>
<keyword id="KW-0819">tRNA processing</keyword>
<accession>Q31AA9</accession>
<protein>
    <recommendedName>
        <fullName evidence="1">Methylenetetrahydrofolate--tRNA-(uracil-5-)-methyltransferase TrmFO</fullName>
        <ecNumber evidence="1">2.1.1.74</ecNumber>
    </recommendedName>
    <alternativeName>
        <fullName evidence="1">Folate-dependent tRNA (uracil-5-)-methyltransferase</fullName>
    </alternativeName>
    <alternativeName>
        <fullName evidence="1">Folate-dependent tRNA(M-5-U54)-methyltransferase</fullName>
    </alternativeName>
</protein>
<proteinExistence type="inferred from homology"/>
<reference key="1">
    <citation type="journal article" date="2006" name="Science">
        <title>Genomic islands and the ecology and evolution of Prochlorococcus.</title>
        <authorList>
            <person name="Coleman M.L."/>
            <person name="Sullivan M.B."/>
            <person name="Martiny A.C."/>
            <person name="Steglich C."/>
            <person name="Barry K."/>
            <person name="Delong E.F."/>
            <person name="Chisholm S.W."/>
        </authorList>
    </citation>
    <scope>NUCLEOTIDE SEQUENCE [LARGE SCALE GENOMIC DNA]</scope>
    <source>
        <strain>MIT 9312</strain>
    </source>
</reference>
<name>TRMFO_PROM9</name>
<gene>
    <name evidence="1" type="primary">trmFO</name>
    <name type="ordered locus">PMT9312_1127</name>
</gene>
<comment type="function">
    <text evidence="1">Catalyzes the folate-dependent formation of 5-methyl-uridine at position 54 (M-5-U54) in all tRNAs.</text>
</comment>
<comment type="catalytic activity">
    <reaction evidence="1">
        <text>uridine(54) in tRNA + (6R)-5,10-methylene-5,6,7,8-tetrahydrofolate + NADH + H(+) = 5-methyluridine(54) in tRNA + (6S)-5,6,7,8-tetrahydrofolate + NAD(+)</text>
        <dbReference type="Rhea" id="RHEA:16873"/>
        <dbReference type="Rhea" id="RHEA-COMP:10167"/>
        <dbReference type="Rhea" id="RHEA-COMP:10193"/>
        <dbReference type="ChEBI" id="CHEBI:15378"/>
        <dbReference type="ChEBI" id="CHEBI:15636"/>
        <dbReference type="ChEBI" id="CHEBI:57453"/>
        <dbReference type="ChEBI" id="CHEBI:57540"/>
        <dbReference type="ChEBI" id="CHEBI:57945"/>
        <dbReference type="ChEBI" id="CHEBI:65315"/>
        <dbReference type="ChEBI" id="CHEBI:74447"/>
        <dbReference type="EC" id="2.1.1.74"/>
    </reaction>
</comment>
<comment type="catalytic activity">
    <reaction evidence="1">
        <text>uridine(54) in tRNA + (6R)-5,10-methylene-5,6,7,8-tetrahydrofolate + NADPH + H(+) = 5-methyluridine(54) in tRNA + (6S)-5,6,7,8-tetrahydrofolate + NADP(+)</text>
        <dbReference type="Rhea" id="RHEA:62372"/>
        <dbReference type="Rhea" id="RHEA-COMP:10167"/>
        <dbReference type="Rhea" id="RHEA-COMP:10193"/>
        <dbReference type="ChEBI" id="CHEBI:15378"/>
        <dbReference type="ChEBI" id="CHEBI:15636"/>
        <dbReference type="ChEBI" id="CHEBI:57453"/>
        <dbReference type="ChEBI" id="CHEBI:57783"/>
        <dbReference type="ChEBI" id="CHEBI:58349"/>
        <dbReference type="ChEBI" id="CHEBI:65315"/>
        <dbReference type="ChEBI" id="CHEBI:74447"/>
        <dbReference type="EC" id="2.1.1.74"/>
    </reaction>
</comment>
<comment type="cofactor">
    <cofactor evidence="1">
        <name>FAD</name>
        <dbReference type="ChEBI" id="CHEBI:57692"/>
    </cofactor>
</comment>
<comment type="subcellular location">
    <subcellularLocation>
        <location evidence="1">Cytoplasm</location>
    </subcellularLocation>
</comment>
<comment type="similarity">
    <text evidence="1">Belongs to the MnmG family. TrmFO subfamily.</text>
</comment>